<sequence length="276" mass="32240">MADDYRRSVELERRIFELDNKCATLRTEKPDDDYLQNASSILDKLKTYYRHGGESSSLPKLLQDYTQVVLDITFYEENKLVDQEFPEDSSPFKIQQLLQDLTEPEVLAGRLVPAQEVQSVLGLELLECLYWRRGALLYMYCHTLHQRKQWIKKNKATFLKCLQEGVRYLMRMLQVRNSVKLNDGVVFHDSATANFLAEGIFSDTHLLTMMYIGEMCFWAVKYEDCSMDTTERKEDRLHFRDIGTQILHKYVLACEGPLQGQGWNTENAKEILSILQ</sequence>
<protein>
    <recommendedName>
        <fullName evidence="2">RAB7A-interacting MON1-CCZ1 complex subunit 1</fullName>
    </recommendedName>
    <alternativeName>
        <fullName>UPF0600 protein C5orf51 homolog</fullName>
    </alternativeName>
</protein>
<evidence type="ECO:0000250" key="1">
    <source>
        <dbReference type="UniProtKB" id="A6NDU8"/>
    </source>
</evidence>
<evidence type="ECO:0000305" key="2"/>
<dbReference type="EMBL" id="AL954357">
    <property type="protein sequence ID" value="CAP19425.1"/>
    <property type="molecule type" value="Genomic_DNA"/>
</dbReference>
<dbReference type="EMBL" id="BC059675">
    <property type="protein sequence ID" value="AAH59675.1"/>
    <property type="molecule type" value="mRNA"/>
</dbReference>
<dbReference type="RefSeq" id="NP_001121701.1">
    <property type="nucleotide sequence ID" value="NM_001128229.1"/>
</dbReference>
<dbReference type="SMR" id="A8Y5U1"/>
<dbReference type="FunCoup" id="A8Y5U1">
    <property type="interactions" value="1551"/>
</dbReference>
<dbReference type="PaxDb" id="7955-ENSDARP00000061831"/>
<dbReference type="PeptideAtlas" id="A8Y5U1"/>
<dbReference type="Ensembl" id="ENSDART00000061832">
    <property type="protein sequence ID" value="ENSDARP00000061831"/>
    <property type="gene ID" value="ENSDARG00000054777"/>
</dbReference>
<dbReference type="Ensembl" id="ENSDART00000192920">
    <property type="protein sequence ID" value="ENSDARP00000147656"/>
    <property type="gene ID" value="ENSDARG00000111808"/>
</dbReference>
<dbReference type="GeneID" id="325885"/>
<dbReference type="KEGG" id="dre:325885"/>
<dbReference type="AGR" id="ZFIN:ZDB-GENE-030131-4610"/>
<dbReference type="CTD" id="285636"/>
<dbReference type="ZFIN" id="ZDB-GENE-030131-4610">
    <property type="gene designation" value="rimoc1"/>
</dbReference>
<dbReference type="eggNOG" id="ENOG502QUAR">
    <property type="taxonomic scope" value="Eukaryota"/>
</dbReference>
<dbReference type="HOGENOM" id="CLU_082742_0_0_1"/>
<dbReference type="InParanoid" id="A8Y5U1"/>
<dbReference type="OMA" id="NEGKEHP"/>
<dbReference type="OrthoDB" id="6135810at2759"/>
<dbReference type="PhylomeDB" id="A8Y5U1"/>
<dbReference type="TreeFam" id="TF331577"/>
<dbReference type="PRO" id="PR:A8Y5U1"/>
<dbReference type="Proteomes" id="UP000000437">
    <property type="component" value="Alternate scaffold 8"/>
</dbReference>
<dbReference type="Proteomes" id="UP000000437">
    <property type="component" value="Chromosome 8"/>
</dbReference>
<dbReference type="Bgee" id="ENSDARG00000054777">
    <property type="expression patterns" value="Expressed in testis and 27 other cell types or tissues"/>
</dbReference>
<dbReference type="GO" id="GO:0005829">
    <property type="term" value="C:cytosol"/>
    <property type="evidence" value="ECO:0000250"/>
    <property type="project" value="UniProtKB"/>
</dbReference>
<dbReference type="GO" id="GO:0000423">
    <property type="term" value="P:mitophagy"/>
    <property type="evidence" value="ECO:0000250"/>
    <property type="project" value="UniProtKB"/>
</dbReference>
<dbReference type="InterPro" id="IPR037657">
    <property type="entry name" value="RIMC1"/>
</dbReference>
<dbReference type="PANTHER" id="PTHR28494:SF1">
    <property type="entry name" value="RAB7A-INTERACTING MON1-CCZ1 COMPLEX SUBUNIT 1"/>
    <property type="match status" value="1"/>
</dbReference>
<dbReference type="PANTHER" id="PTHR28494">
    <property type="entry name" value="UPF0600 PROTEIN C5ORF51"/>
    <property type="match status" value="1"/>
</dbReference>
<dbReference type="Pfam" id="PF17716">
    <property type="entry name" value="RIMC1"/>
    <property type="match status" value="1"/>
</dbReference>
<name>RIMC1_DANRE</name>
<comment type="function">
    <text evidence="1">Plays an important role in the removal of damaged mitochondria via mitophagy by controlling the stability and localization of RAB7A (By similarity). Required for the recruitment of RAB7A and ATG9A vesicles to damaged mitochondria and promotes the stability of RAB7A by inhibiting its proteasomal degradation during mitophagy (By similarity).</text>
</comment>
<comment type="subcellular location">
    <subcellularLocation>
        <location evidence="1">Cytoplasm</location>
        <location evidence="1">Cytosol</location>
    </subcellularLocation>
</comment>
<comment type="similarity">
    <text evidence="2">Belongs to the RIMOC1 family.</text>
</comment>
<organism>
    <name type="scientific">Danio rerio</name>
    <name type="common">Zebrafish</name>
    <name type="synonym">Brachydanio rerio</name>
    <dbReference type="NCBI Taxonomy" id="7955"/>
    <lineage>
        <taxon>Eukaryota</taxon>
        <taxon>Metazoa</taxon>
        <taxon>Chordata</taxon>
        <taxon>Craniata</taxon>
        <taxon>Vertebrata</taxon>
        <taxon>Euteleostomi</taxon>
        <taxon>Actinopterygii</taxon>
        <taxon>Neopterygii</taxon>
        <taxon>Teleostei</taxon>
        <taxon>Ostariophysi</taxon>
        <taxon>Cypriniformes</taxon>
        <taxon>Danionidae</taxon>
        <taxon>Danioninae</taxon>
        <taxon>Danio</taxon>
    </lineage>
</organism>
<proteinExistence type="evidence at transcript level"/>
<keyword id="KW-0072">Autophagy</keyword>
<keyword id="KW-0963">Cytoplasm</keyword>
<keyword id="KW-1185">Reference proteome</keyword>
<reference key="1">
    <citation type="journal article" date="2013" name="Nature">
        <title>The zebrafish reference genome sequence and its relationship to the human genome.</title>
        <authorList>
            <person name="Howe K."/>
            <person name="Clark M.D."/>
            <person name="Torroja C.F."/>
            <person name="Torrance J."/>
            <person name="Berthelot C."/>
            <person name="Muffato M."/>
            <person name="Collins J.E."/>
            <person name="Humphray S."/>
            <person name="McLaren K."/>
            <person name="Matthews L."/>
            <person name="McLaren S."/>
            <person name="Sealy I."/>
            <person name="Caccamo M."/>
            <person name="Churcher C."/>
            <person name="Scott C."/>
            <person name="Barrett J.C."/>
            <person name="Koch R."/>
            <person name="Rauch G.J."/>
            <person name="White S."/>
            <person name="Chow W."/>
            <person name="Kilian B."/>
            <person name="Quintais L.T."/>
            <person name="Guerra-Assuncao J.A."/>
            <person name="Zhou Y."/>
            <person name="Gu Y."/>
            <person name="Yen J."/>
            <person name="Vogel J.H."/>
            <person name="Eyre T."/>
            <person name="Redmond S."/>
            <person name="Banerjee R."/>
            <person name="Chi J."/>
            <person name="Fu B."/>
            <person name="Langley E."/>
            <person name="Maguire S.F."/>
            <person name="Laird G.K."/>
            <person name="Lloyd D."/>
            <person name="Kenyon E."/>
            <person name="Donaldson S."/>
            <person name="Sehra H."/>
            <person name="Almeida-King J."/>
            <person name="Loveland J."/>
            <person name="Trevanion S."/>
            <person name="Jones M."/>
            <person name="Quail M."/>
            <person name="Willey D."/>
            <person name="Hunt A."/>
            <person name="Burton J."/>
            <person name="Sims S."/>
            <person name="McLay K."/>
            <person name="Plumb B."/>
            <person name="Davis J."/>
            <person name="Clee C."/>
            <person name="Oliver K."/>
            <person name="Clark R."/>
            <person name="Riddle C."/>
            <person name="Elliot D."/>
            <person name="Threadgold G."/>
            <person name="Harden G."/>
            <person name="Ware D."/>
            <person name="Begum S."/>
            <person name="Mortimore B."/>
            <person name="Kerry G."/>
            <person name="Heath P."/>
            <person name="Phillimore B."/>
            <person name="Tracey A."/>
            <person name="Corby N."/>
            <person name="Dunn M."/>
            <person name="Johnson C."/>
            <person name="Wood J."/>
            <person name="Clark S."/>
            <person name="Pelan S."/>
            <person name="Griffiths G."/>
            <person name="Smith M."/>
            <person name="Glithero R."/>
            <person name="Howden P."/>
            <person name="Barker N."/>
            <person name="Lloyd C."/>
            <person name="Stevens C."/>
            <person name="Harley J."/>
            <person name="Holt K."/>
            <person name="Panagiotidis G."/>
            <person name="Lovell J."/>
            <person name="Beasley H."/>
            <person name="Henderson C."/>
            <person name="Gordon D."/>
            <person name="Auger K."/>
            <person name="Wright D."/>
            <person name="Collins J."/>
            <person name="Raisen C."/>
            <person name="Dyer L."/>
            <person name="Leung K."/>
            <person name="Robertson L."/>
            <person name="Ambridge K."/>
            <person name="Leongamornlert D."/>
            <person name="McGuire S."/>
            <person name="Gilderthorp R."/>
            <person name="Griffiths C."/>
            <person name="Manthravadi D."/>
            <person name="Nichol S."/>
            <person name="Barker G."/>
            <person name="Whitehead S."/>
            <person name="Kay M."/>
            <person name="Brown J."/>
            <person name="Murnane C."/>
            <person name="Gray E."/>
            <person name="Humphries M."/>
            <person name="Sycamore N."/>
            <person name="Barker D."/>
            <person name="Saunders D."/>
            <person name="Wallis J."/>
            <person name="Babbage A."/>
            <person name="Hammond S."/>
            <person name="Mashreghi-Mohammadi M."/>
            <person name="Barr L."/>
            <person name="Martin S."/>
            <person name="Wray P."/>
            <person name="Ellington A."/>
            <person name="Matthews N."/>
            <person name="Ellwood M."/>
            <person name="Woodmansey R."/>
            <person name="Clark G."/>
            <person name="Cooper J."/>
            <person name="Tromans A."/>
            <person name="Grafham D."/>
            <person name="Skuce C."/>
            <person name="Pandian R."/>
            <person name="Andrews R."/>
            <person name="Harrison E."/>
            <person name="Kimberley A."/>
            <person name="Garnett J."/>
            <person name="Fosker N."/>
            <person name="Hall R."/>
            <person name="Garner P."/>
            <person name="Kelly D."/>
            <person name="Bird C."/>
            <person name="Palmer S."/>
            <person name="Gehring I."/>
            <person name="Berger A."/>
            <person name="Dooley C.M."/>
            <person name="Ersan-Urun Z."/>
            <person name="Eser C."/>
            <person name="Geiger H."/>
            <person name="Geisler M."/>
            <person name="Karotki L."/>
            <person name="Kirn A."/>
            <person name="Konantz J."/>
            <person name="Konantz M."/>
            <person name="Oberlander M."/>
            <person name="Rudolph-Geiger S."/>
            <person name="Teucke M."/>
            <person name="Lanz C."/>
            <person name="Raddatz G."/>
            <person name="Osoegawa K."/>
            <person name="Zhu B."/>
            <person name="Rapp A."/>
            <person name="Widaa S."/>
            <person name="Langford C."/>
            <person name="Yang F."/>
            <person name="Schuster S.C."/>
            <person name="Carter N.P."/>
            <person name="Harrow J."/>
            <person name="Ning Z."/>
            <person name="Herrero J."/>
            <person name="Searle S.M."/>
            <person name="Enright A."/>
            <person name="Geisler R."/>
            <person name="Plasterk R.H."/>
            <person name="Lee C."/>
            <person name="Westerfield M."/>
            <person name="de Jong P.J."/>
            <person name="Zon L.I."/>
            <person name="Postlethwait J.H."/>
            <person name="Nusslein-Volhard C."/>
            <person name="Hubbard T.J."/>
            <person name="Roest Crollius H."/>
            <person name="Rogers J."/>
            <person name="Stemple D.L."/>
        </authorList>
    </citation>
    <scope>NUCLEOTIDE SEQUENCE [LARGE SCALE GENOMIC DNA]</scope>
    <source>
        <strain>Tuebingen</strain>
    </source>
</reference>
<reference key="2">
    <citation type="submission" date="2003-10" db="EMBL/GenBank/DDBJ databases">
        <authorList>
            <consortium name="NIH - Zebrafish Gene Collection (ZGC) project"/>
        </authorList>
    </citation>
    <scope>NUCLEOTIDE SEQUENCE [LARGE SCALE MRNA] OF 3-276</scope>
    <source>
        <tissue>Retina</tissue>
    </source>
</reference>
<gene>
    <name type="primary">rimoc1</name>
    <name type="ORF">si:dkey-46a10.3</name>
    <name type="ORF">wu:fd42g01</name>
</gene>
<accession>A8Y5U1</accession>
<accession>Q6PBK5</accession>
<feature type="chain" id="PRO_0000341216" description="RAB7A-interacting MON1-CCZ1 complex subunit 1">
    <location>
        <begin position="1"/>
        <end position="276"/>
    </location>
</feature>